<feature type="chain" id="PRO_0000092887" description="Phosphate import ATP-binding protein PstB 1">
    <location>
        <begin position="1"/>
        <end position="252"/>
    </location>
</feature>
<feature type="domain" description="ABC transporter" evidence="1">
    <location>
        <begin position="6"/>
        <end position="247"/>
    </location>
</feature>
<feature type="binding site" evidence="1">
    <location>
        <begin position="38"/>
        <end position="45"/>
    </location>
    <ligand>
        <name>ATP</name>
        <dbReference type="ChEBI" id="CHEBI:30616"/>
    </ligand>
</feature>
<organism>
    <name type="scientific">Streptococcus agalactiae serotype V (strain ATCC BAA-611 / 2603 V/R)</name>
    <dbReference type="NCBI Taxonomy" id="208435"/>
    <lineage>
        <taxon>Bacteria</taxon>
        <taxon>Bacillati</taxon>
        <taxon>Bacillota</taxon>
        <taxon>Bacilli</taxon>
        <taxon>Lactobacillales</taxon>
        <taxon>Streptococcaceae</taxon>
        <taxon>Streptococcus</taxon>
    </lineage>
</organism>
<dbReference type="EC" id="7.3.2.1" evidence="1"/>
<dbReference type="EMBL" id="AE009948">
    <property type="protein sequence ID" value="AAM99871.1"/>
    <property type="molecule type" value="Genomic_DNA"/>
</dbReference>
<dbReference type="RefSeq" id="NP_687999.1">
    <property type="nucleotide sequence ID" value="NC_004116.1"/>
</dbReference>
<dbReference type="SMR" id="P63368"/>
<dbReference type="STRING" id="208435.SAG0988"/>
<dbReference type="KEGG" id="sag:SAG0988"/>
<dbReference type="PATRIC" id="fig|208435.3.peg.995"/>
<dbReference type="HOGENOM" id="CLU_000604_1_22_9"/>
<dbReference type="OrthoDB" id="9802185at2"/>
<dbReference type="Proteomes" id="UP000000821">
    <property type="component" value="Chromosome"/>
</dbReference>
<dbReference type="GO" id="GO:0005886">
    <property type="term" value="C:plasma membrane"/>
    <property type="evidence" value="ECO:0007669"/>
    <property type="project" value="UniProtKB-SubCell"/>
</dbReference>
<dbReference type="GO" id="GO:0005524">
    <property type="term" value="F:ATP binding"/>
    <property type="evidence" value="ECO:0007669"/>
    <property type="project" value="UniProtKB-KW"/>
</dbReference>
<dbReference type="GO" id="GO:0016887">
    <property type="term" value="F:ATP hydrolysis activity"/>
    <property type="evidence" value="ECO:0007669"/>
    <property type="project" value="InterPro"/>
</dbReference>
<dbReference type="GO" id="GO:0015415">
    <property type="term" value="F:ATPase-coupled phosphate ion transmembrane transporter activity"/>
    <property type="evidence" value="ECO:0007669"/>
    <property type="project" value="UniProtKB-EC"/>
</dbReference>
<dbReference type="GO" id="GO:0035435">
    <property type="term" value="P:phosphate ion transmembrane transport"/>
    <property type="evidence" value="ECO:0007669"/>
    <property type="project" value="InterPro"/>
</dbReference>
<dbReference type="CDD" id="cd03260">
    <property type="entry name" value="ABC_PstB_phosphate_transporter"/>
    <property type="match status" value="1"/>
</dbReference>
<dbReference type="Gene3D" id="3.40.50.300">
    <property type="entry name" value="P-loop containing nucleotide triphosphate hydrolases"/>
    <property type="match status" value="1"/>
</dbReference>
<dbReference type="InterPro" id="IPR003593">
    <property type="entry name" value="AAA+_ATPase"/>
</dbReference>
<dbReference type="InterPro" id="IPR003439">
    <property type="entry name" value="ABC_transporter-like_ATP-bd"/>
</dbReference>
<dbReference type="InterPro" id="IPR017871">
    <property type="entry name" value="ABC_transporter-like_CS"/>
</dbReference>
<dbReference type="InterPro" id="IPR027417">
    <property type="entry name" value="P-loop_NTPase"/>
</dbReference>
<dbReference type="InterPro" id="IPR005670">
    <property type="entry name" value="PstB-like"/>
</dbReference>
<dbReference type="NCBIfam" id="TIGR00972">
    <property type="entry name" value="3a0107s01c2"/>
    <property type="match status" value="1"/>
</dbReference>
<dbReference type="PANTHER" id="PTHR43423">
    <property type="entry name" value="ABC TRANSPORTER I FAMILY MEMBER 17"/>
    <property type="match status" value="1"/>
</dbReference>
<dbReference type="PANTHER" id="PTHR43423:SF1">
    <property type="entry name" value="ABC TRANSPORTER I FAMILY MEMBER 17"/>
    <property type="match status" value="1"/>
</dbReference>
<dbReference type="Pfam" id="PF00005">
    <property type="entry name" value="ABC_tran"/>
    <property type="match status" value="1"/>
</dbReference>
<dbReference type="SMART" id="SM00382">
    <property type="entry name" value="AAA"/>
    <property type="match status" value="1"/>
</dbReference>
<dbReference type="SUPFAM" id="SSF52540">
    <property type="entry name" value="P-loop containing nucleoside triphosphate hydrolases"/>
    <property type="match status" value="1"/>
</dbReference>
<dbReference type="PROSITE" id="PS00211">
    <property type="entry name" value="ABC_TRANSPORTER_1"/>
    <property type="match status" value="1"/>
</dbReference>
<dbReference type="PROSITE" id="PS50893">
    <property type="entry name" value="ABC_TRANSPORTER_2"/>
    <property type="match status" value="1"/>
</dbReference>
<dbReference type="PROSITE" id="PS51238">
    <property type="entry name" value="PSTB"/>
    <property type="match status" value="1"/>
</dbReference>
<comment type="function">
    <text evidence="1">Part of the ABC transporter complex PstSACB involved in phosphate import. Responsible for energy coupling to the transport system.</text>
</comment>
<comment type="catalytic activity">
    <reaction evidence="1">
        <text>phosphate(out) + ATP + H2O = ADP + 2 phosphate(in) + H(+)</text>
        <dbReference type="Rhea" id="RHEA:24440"/>
        <dbReference type="ChEBI" id="CHEBI:15377"/>
        <dbReference type="ChEBI" id="CHEBI:15378"/>
        <dbReference type="ChEBI" id="CHEBI:30616"/>
        <dbReference type="ChEBI" id="CHEBI:43474"/>
        <dbReference type="ChEBI" id="CHEBI:456216"/>
        <dbReference type="EC" id="7.3.2.1"/>
    </reaction>
</comment>
<comment type="subunit">
    <text evidence="1">The complex is composed of two ATP-binding proteins (PstB), two transmembrane proteins (PstC and PstA) and a solute-binding protein (PstS).</text>
</comment>
<comment type="subcellular location">
    <subcellularLocation>
        <location evidence="1">Cell membrane</location>
        <topology evidence="1">Peripheral membrane protein</topology>
    </subcellularLocation>
</comment>
<comment type="similarity">
    <text evidence="1">Belongs to the ABC transporter superfamily. Phosphate importer (TC 3.A.1.7) family.</text>
</comment>
<sequence length="252" mass="28054">MTQPILQVSDLSVYYNKKKALKEVSMDFYPNEITALIGPSGSGKSTLLRAINRMGDLNPEVTLTGAVMYNGHNVYSPRTDTVELRKEIGMVFQQPNPFPMSVFENVVYGLRLKGIKDKATLDEAVETSLKGASIWDEVKDRLHDSALGLSGGQQQRVCIARTLATKPKIILLDEPTSALDPISAGKIEETLHGLKDQYTMLLVTRSMQQASRISDRTGFFLDGNLIEYGNTKEMFMNPKHKETEDYITGKFG</sequence>
<gene>
    <name evidence="1" type="primary">pstB1</name>
    <name type="ordered locus">SAG0988</name>
</gene>
<accession>P63368</accession>
<accession>Q8DZV8</accession>
<accession>Q8E5K6</accession>
<evidence type="ECO:0000255" key="1">
    <source>
        <dbReference type="HAMAP-Rule" id="MF_01702"/>
    </source>
</evidence>
<protein>
    <recommendedName>
        <fullName evidence="1">Phosphate import ATP-binding protein PstB 1</fullName>
        <ecNumber evidence="1">7.3.2.1</ecNumber>
    </recommendedName>
    <alternativeName>
        <fullName evidence="1">ABC phosphate transporter 1</fullName>
    </alternativeName>
    <alternativeName>
        <fullName evidence="1">Phosphate-transporting ATPase 1</fullName>
    </alternativeName>
</protein>
<proteinExistence type="inferred from homology"/>
<keyword id="KW-0067">ATP-binding</keyword>
<keyword id="KW-1003">Cell membrane</keyword>
<keyword id="KW-0472">Membrane</keyword>
<keyword id="KW-0547">Nucleotide-binding</keyword>
<keyword id="KW-0592">Phosphate transport</keyword>
<keyword id="KW-1185">Reference proteome</keyword>
<keyword id="KW-1278">Translocase</keyword>
<keyword id="KW-0813">Transport</keyword>
<reference key="1">
    <citation type="journal article" date="2002" name="Proc. Natl. Acad. Sci. U.S.A.">
        <title>Complete genome sequence and comparative genomic analysis of an emerging human pathogen, serotype V Streptococcus agalactiae.</title>
        <authorList>
            <person name="Tettelin H."/>
            <person name="Masignani V."/>
            <person name="Cieslewicz M.J."/>
            <person name="Eisen J.A."/>
            <person name="Peterson S.N."/>
            <person name="Wessels M.R."/>
            <person name="Paulsen I.T."/>
            <person name="Nelson K.E."/>
            <person name="Margarit I."/>
            <person name="Read T.D."/>
            <person name="Madoff L.C."/>
            <person name="Wolf A.M."/>
            <person name="Beanan M.J."/>
            <person name="Brinkac L.M."/>
            <person name="Daugherty S.C."/>
            <person name="DeBoy R.T."/>
            <person name="Durkin A.S."/>
            <person name="Kolonay J.F."/>
            <person name="Madupu R."/>
            <person name="Lewis M.R."/>
            <person name="Radune D."/>
            <person name="Fedorova N.B."/>
            <person name="Scanlan D."/>
            <person name="Khouri H.M."/>
            <person name="Mulligan S."/>
            <person name="Carty H.A."/>
            <person name="Cline R.T."/>
            <person name="Van Aken S.E."/>
            <person name="Gill J."/>
            <person name="Scarselli M."/>
            <person name="Mora M."/>
            <person name="Iacobini E.T."/>
            <person name="Brettoni C."/>
            <person name="Galli G."/>
            <person name="Mariani M."/>
            <person name="Vegni F."/>
            <person name="Maione D."/>
            <person name="Rinaudo D."/>
            <person name="Rappuoli R."/>
            <person name="Telford J.L."/>
            <person name="Kasper D.L."/>
            <person name="Grandi G."/>
            <person name="Fraser C.M."/>
        </authorList>
    </citation>
    <scope>NUCLEOTIDE SEQUENCE [LARGE SCALE GENOMIC DNA]</scope>
    <source>
        <strain>ATCC BAA-611 / 2603 V/R</strain>
    </source>
</reference>
<name>PSTB1_STRA5</name>